<reference key="1">
    <citation type="journal article" date="2006" name="PLoS Genet.">
        <title>Genome sequence of Rickettsia bellii illuminates the role of amoebae in gene exchanges between intracellular pathogens.</title>
        <authorList>
            <person name="Ogata H."/>
            <person name="La Scola B."/>
            <person name="Audic S."/>
            <person name="Renesto P."/>
            <person name="Blanc G."/>
            <person name="Robert C."/>
            <person name="Fournier P.-E."/>
            <person name="Claverie J.-M."/>
            <person name="Raoult D."/>
        </authorList>
    </citation>
    <scope>NUCLEOTIDE SEQUENCE [LARGE SCALE GENOMIC DNA]</scope>
    <source>
        <strain>RML369-C</strain>
    </source>
</reference>
<proteinExistence type="inferred from homology"/>
<protein>
    <recommendedName>
        <fullName evidence="1">Large ribosomal subunit protein uL4</fullName>
    </recommendedName>
    <alternativeName>
        <fullName evidence="3">50S ribosomal protein L4</fullName>
    </alternativeName>
</protein>
<comment type="function">
    <text evidence="1">One of the primary rRNA binding proteins, this protein initially binds near the 5'-end of the 23S rRNA. It is important during the early stages of 50S assembly. It makes multiple contacts with different domains of the 23S rRNA in the assembled 50S subunit and ribosome.</text>
</comment>
<comment type="function">
    <text evidence="1">Forms part of the polypeptide exit tunnel.</text>
</comment>
<comment type="subunit">
    <text evidence="1">Part of the 50S ribosomal subunit.</text>
</comment>
<comment type="similarity">
    <text evidence="1">Belongs to the universal ribosomal protein uL4 family.</text>
</comment>
<name>RL4_RICBR</name>
<organism>
    <name type="scientific">Rickettsia bellii (strain RML369-C)</name>
    <dbReference type="NCBI Taxonomy" id="336407"/>
    <lineage>
        <taxon>Bacteria</taxon>
        <taxon>Pseudomonadati</taxon>
        <taxon>Pseudomonadota</taxon>
        <taxon>Alphaproteobacteria</taxon>
        <taxon>Rickettsiales</taxon>
        <taxon>Rickettsiaceae</taxon>
        <taxon>Rickettsieae</taxon>
        <taxon>Rickettsia</taxon>
        <taxon>belli group</taxon>
    </lineage>
</organism>
<gene>
    <name evidence="1" type="primary">rplD</name>
    <name type="ordered locus">RBE_1061</name>
</gene>
<evidence type="ECO:0000255" key="1">
    <source>
        <dbReference type="HAMAP-Rule" id="MF_01328"/>
    </source>
</evidence>
<evidence type="ECO:0000256" key="2">
    <source>
        <dbReference type="SAM" id="MobiDB-lite"/>
    </source>
</evidence>
<evidence type="ECO:0000305" key="3"/>
<keyword id="KW-0687">Ribonucleoprotein</keyword>
<keyword id="KW-0689">Ribosomal protein</keyword>
<keyword id="KW-0694">RNA-binding</keyword>
<keyword id="KW-0699">rRNA-binding</keyword>
<sequence length="207" mass="22993">MKTKILNLANEEIGEISLNEDIFAVEFIRDDIIKQVVDWQRAKAMAGTHKTKTVSEVSGTTKKPFKQKGTGNARQGSLRSVQMRGGGVIHGPVVRSHATKLPKKVRKLGLIHALSEKFSEGKLLVIDSLKLETPKTSNLVNILNKFQGKSFFVIDGNEVDVNFSLAAQNIYNTVVVPQIGANVYDIIRHEYVLLSQEAVNVLEERLK</sequence>
<dbReference type="EMBL" id="CP000087">
    <property type="protein sequence ID" value="ABE05142.1"/>
    <property type="molecule type" value="Genomic_DNA"/>
</dbReference>
<dbReference type="RefSeq" id="WP_011477720.1">
    <property type="nucleotide sequence ID" value="NC_007940.1"/>
</dbReference>
<dbReference type="SMR" id="Q1RHM2"/>
<dbReference type="KEGG" id="rbe:RBE_1061"/>
<dbReference type="eggNOG" id="COG0088">
    <property type="taxonomic scope" value="Bacteria"/>
</dbReference>
<dbReference type="HOGENOM" id="CLU_041575_5_1_5"/>
<dbReference type="OrthoDB" id="9803201at2"/>
<dbReference type="Proteomes" id="UP000001951">
    <property type="component" value="Chromosome"/>
</dbReference>
<dbReference type="GO" id="GO:1990904">
    <property type="term" value="C:ribonucleoprotein complex"/>
    <property type="evidence" value="ECO:0007669"/>
    <property type="project" value="UniProtKB-KW"/>
</dbReference>
<dbReference type="GO" id="GO:0005840">
    <property type="term" value="C:ribosome"/>
    <property type="evidence" value="ECO:0007669"/>
    <property type="project" value="UniProtKB-KW"/>
</dbReference>
<dbReference type="GO" id="GO:0019843">
    <property type="term" value="F:rRNA binding"/>
    <property type="evidence" value="ECO:0007669"/>
    <property type="project" value="UniProtKB-UniRule"/>
</dbReference>
<dbReference type="GO" id="GO:0003735">
    <property type="term" value="F:structural constituent of ribosome"/>
    <property type="evidence" value="ECO:0007669"/>
    <property type="project" value="InterPro"/>
</dbReference>
<dbReference type="GO" id="GO:0006412">
    <property type="term" value="P:translation"/>
    <property type="evidence" value="ECO:0007669"/>
    <property type="project" value="UniProtKB-UniRule"/>
</dbReference>
<dbReference type="FunFam" id="3.40.1370.10:FF:000015">
    <property type="entry name" value="50S ribosomal protein L4"/>
    <property type="match status" value="1"/>
</dbReference>
<dbReference type="Gene3D" id="3.40.1370.10">
    <property type="match status" value="1"/>
</dbReference>
<dbReference type="HAMAP" id="MF_01328_B">
    <property type="entry name" value="Ribosomal_uL4_B"/>
    <property type="match status" value="1"/>
</dbReference>
<dbReference type="InterPro" id="IPR002136">
    <property type="entry name" value="Ribosomal_uL4"/>
</dbReference>
<dbReference type="InterPro" id="IPR013005">
    <property type="entry name" value="Ribosomal_uL4-like"/>
</dbReference>
<dbReference type="InterPro" id="IPR023574">
    <property type="entry name" value="Ribosomal_uL4_dom_sf"/>
</dbReference>
<dbReference type="NCBIfam" id="TIGR03953">
    <property type="entry name" value="rplD_bact"/>
    <property type="match status" value="1"/>
</dbReference>
<dbReference type="PANTHER" id="PTHR10746">
    <property type="entry name" value="50S RIBOSOMAL PROTEIN L4"/>
    <property type="match status" value="1"/>
</dbReference>
<dbReference type="PANTHER" id="PTHR10746:SF6">
    <property type="entry name" value="LARGE RIBOSOMAL SUBUNIT PROTEIN UL4M"/>
    <property type="match status" value="1"/>
</dbReference>
<dbReference type="Pfam" id="PF00573">
    <property type="entry name" value="Ribosomal_L4"/>
    <property type="match status" value="1"/>
</dbReference>
<dbReference type="SUPFAM" id="SSF52166">
    <property type="entry name" value="Ribosomal protein L4"/>
    <property type="match status" value="1"/>
</dbReference>
<feature type="chain" id="PRO_0000242429" description="Large ribosomal subunit protein uL4">
    <location>
        <begin position="1"/>
        <end position="207"/>
    </location>
</feature>
<feature type="region of interest" description="Disordered" evidence="2">
    <location>
        <begin position="53"/>
        <end position="76"/>
    </location>
</feature>
<accession>Q1RHM2</accession>